<feature type="chain" id="PRO_0000085573" description="Plastocyanin">
    <location>
        <begin position="1"/>
        <end position="99"/>
    </location>
</feature>
<feature type="domain" description="Plastocyanin-like">
    <location>
        <begin position="1"/>
        <end position="99"/>
    </location>
</feature>
<feature type="binding site" evidence="1">
    <location>
        <position position="37"/>
    </location>
    <ligand>
        <name>Cu cation</name>
        <dbReference type="ChEBI" id="CHEBI:23378"/>
    </ligand>
</feature>
<feature type="binding site" evidence="1">
    <location>
        <position position="84"/>
    </location>
    <ligand>
        <name>Cu cation</name>
        <dbReference type="ChEBI" id="CHEBI:23378"/>
    </ligand>
</feature>
<feature type="binding site" evidence="1">
    <location>
        <position position="87"/>
    </location>
    <ligand>
        <name>Cu cation</name>
        <dbReference type="ChEBI" id="CHEBI:23378"/>
    </ligand>
</feature>
<feature type="binding site" evidence="1">
    <location>
        <position position="92"/>
    </location>
    <ligand>
        <name>Cu cation</name>
        <dbReference type="ChEBI" id="CHEBI:23378"/>
    </ligand>
</feature>
<feature type="sequence variant" description="In 40% of the molecules.">
    <original>I</original>
    <variation>V</variation>
    <location>
        <position position="15"/>
    </location>
</feature>
<feature type="sequence variant" description="In 50% of the molecules.">
    <original>S</original>
    <variation>G</variation>
    <location>
        <position position="17"/>
    </location>
</feature>
<organism>
    <name type="scientific">Sambucus nigra</name>
    <name type="common">European elder</name>
    <dbReference type="NCBI Taxonomy" id="4202"/>
    <lineage>
        <taxon>Eukaryota</taxon>
        <taxon>Viridiplantae</taxon>
        <taxon>Streptophyta</taxon>
        <taxon>Embryophyta</taxon>
        <taxon>Tracheophyta</taxon>
        <taxon>Spermatophyta</taxon>
        <taxon>Magnoliopsida</taxon>
        <taxon>eudicotyledons</taxon>
        <taxon>Gunneridae</taxon>
        <taxon>Pentapetalae</taxon>
        <taxon>asterids</taxon>
        <taxon>campanulids</taxon>
        <taxon>Dipsacales</taxon>
        <taxon>Adoxaceae</taxon>
        <taxon>Sambucus</taxon>
    </lineage>
</organism>
<accession>P00291</accession>
<proteinExistence type="evidence at protein level"/>
<evidence type="ECO:0000250" key="1">
    <source>
        <dbReference type="UniProtKB" id="P18068"/>
    </source>
</evidence>
<evidence type="ECO:0000269" key="2">
    <source>
    </source>
</evidence>
<evidence type="ECO:0000305" key="3"/>
<name>PLAS_SAMNI</name>
<comment type="function">
    <text evidence="1">Participates in electron transfer between P700 and the cytochrome b6-f complex in photosystem I.</text>
</comment>
<comment type="cofactor">
    <cofactor evidence="1">
        <name>Cu(2+)</name>
        <dbReference type="ChEBI" id="CHEBI:29036"/>
    </cofactor>
</comment>
<comment type="subcellular location">
    <subcellularLocation>
        <location evidence="2">Plastid</location>
        <location evidence="2">Chloroplast thylakoid membrane</location>
        <topology evidence="1">Peripheral membrane protein</topology>
        <orientation evidence="1">Lumenal side</orientation>
    </subcellularLocation>
    <text>Loosely bound to the inner thylakoid membrane surface in chloroplasts (By similarity).</text>
</comment>
<comment type="similarity">
    <text evidence="3">Belongs to the plastocyanin family.</text>
</comment>
<reference key="1">
    <citation type="journal article" date="1974" name="Eur. J. Biochem.">
        <title>The amino-acid sequence of plastocyanin from Sambucus nigra L. (Elder).</title>
        <authorList>
            <person name="Scawen M.D."/>
            <person name="Ramshaw J.A.M."/>
            <person name="Brown R.H."/>
            <person name="Boulter D."/>
        </authorList>
    </citation>
    <scope>PROTEIN SEQUENCE</scope>
    <scope>SUBCELLULAR LOCATION</scope>
</reference>
<protein>
    <recommendedName>
        <fullName>Plastocyanin</fullName>
    </recommendedName>
</protein>
<sequence length="99" mass="10461">VEILLGGEDGSLAFIPSNFSVPSGEKITFKNNAGFPHNVVFDEDEVPSGVDSAKISMSEDDLLNAPGETYSVTLTESGTYKFYCSPHQGAGMVGKVTVN</sequence>
<dbReference type="PIR" id="A00301">
    <property type="entry name" value="CUED"/>
</dbReference>
<dbReference type="SMR" id="P00291"/>
<dbReference type="GO" id="GO:0009543">
    <property type="term" value="C:chloroplast thylakoid lumen"/>
    <property type="evidence" value="ECO:0007669"/>
    <property type="project" value="TreeGrafter"/>
</dbReference>
<dbReference type="GO" id="GO:0009535">
    <property type="term" value="C:chloroplast thylakoid membrane"/>
    <property type="evidence" value="ECO:0007669"/>
    <property type="project" value="UniProtKB-SubCell"/>
</dbReference>
<dbReference type="GO" id="GO:0005507">
    <property type="term" value="F:copper ion binding"/>
    <property type="evidence" value="ECO:0007669"/>
    <property type="project" value="InterPro"/>
</dbReference>
<dbReference type="GO" id="GO:0046028">
    <property type="term" value="F:electron transporter, transferring electrons from cytochrome b6/f complex of photosystem II activity"/>
    <property type="evidence" value="ECO:0007669"/>
    <property type="project" value="TreeGrafter"/>
</dbReference>
<dbReference type="CDD" id="cd04219">
    <property type="entry name" value="Plastocyanin"/>
    <property type="match status" value="1"/>
</dbReference>
<dbReference type="Gene3D" id="2.60.40.420">
    <property type="entry name" value="Cupredoxins - blue copper proteins"/>
    <property type="match status" value="1"/>
</dbReference>
<dbReference type="InterPro" id="IPR000923">
    <property type="entry name" value="BlueCu_1"/>
</dbReference>
<dbReference type="InterPro" id="IPR028871">
    <property type="entry name" value="BlueCu_1_BS"/>
</dbReference>
<dbReference type="InterPro" id="IPR001235">
    <property type="entry name" value="Copper_blue_Plastocyanin"/>
</dbReference>
<dbReference type="InterPro" id="IPR008972">
    <property type="entry name" value="Cupredoxin"/>
</dbReference>
<dbReference type="InterPro" id="IPR002387">
    <property type="entry name" value="Plastocyanin"/>
</dbReference>
<dbReference type="NCBIfam" id="TIGR02656">
    <property type="entry name" value="cyanin_plasto"/>
    <property type="match status" value="1"/>
</dbReference>
<dbReference type="PANTHER" id="PTHR34192">
    <property type="entry name" value="PLASTOCYANIN MAJOR ISOFORM, CHLOROPLASTIC-RELATED"/>
    <property type="match status" value="1"/>
</dbReference>
<dbReference type="PANTHER" id="PTHR34192:SF10">
    <property type="entry name" value="PLASTOCYANIN MAJOR ISOFORM, CHLOROPLASTIC-RELATED"/>
    <property type="match status" value="1"/>
</dbReference>
<dbReference type="Pfam" id="PF00127">
    <property type="entry name" value="Copper-bind"/>
    <property type="match status" value="1"/>
</dbReference>
<dbReference type="PRINTS" id="PR00156">
    <property type="entry name" value="COPPERBLUE"/>
</dbReference>
<dbReference type="PRINTS" id="PR00157">
    <property type="entry name" value="PLASTOCYANIN"/>
</dbReference>
<dbReference type="SUPFAM" id="SSF49503">
    <property type="entry name" value="Cupredoxins"/>
    <property type="match status" value="1"/>
</dbReference>
<dbReference type="PROSITE" id="PS00196">
    <property type="entry name" value="COPPER_BLUE"/>
    <property type="match status" value="1"/>
</dbReference>
<gene>
    <name type="primary">PETE</name>
</gene>
<keyword id="KW-0150">Chloroplast</keyword>
<keyword id="KW-0186">Copper</keyword>
<keyword id="KW-0903">Direct protein sequencing</keyword>
<keyword id="KW-0249">Electron transport</keyword>
<keyword id="KW-0472">Membrane</keyword>
<keyword id="KW-0479">Metal-binding</keyword>
<keyword id="KW-0934">Plastid</keyword>
<keyword id="KW-0793">Thylakoid</keyword>
<keyword id="KW-0813">Transport</keyword>